<feature type="chain" id="PRO_0000062667" description="Ribulose bisphosphate carboxylase">
    <location>
        <begin position="1"/>
        <end position="459"/>
    </location>
</feature>
<feature type="active site" description="Proton acceptor" evidence="1">
    <location>
        <position position="166"/>
    </location>
</feature>
<feature type="active site" description="Proton acceptor" evidence="1">
    <location>
        <position position="287"/>
    </location>
</feature>
<feature type="binding site" description="in homodimeric partner" evidence="1">
    <location>
        <position position="111"/>
    </location>
    <ligand>
        <name>substrate</name>
    </ligand>
</feature>
<feature type="binding site" evidence="1">
    <location>
        <position position="168"/>
    </location>
    <ligand>
        <name>substrate</name>
    </ligand>
</feature>
<feature type="binding site" description="via carbamate group" evidence="1">
    <location>
        <position position="191"/>
    </location>
    <ligand>
        <name>Mg(2+)</name>
        <dbReference type="ChEBI" id="CHEBI:18420"/>
    </ligand>
</feature>
<feature type="binding site" evidence="1">
    <location>
        <position position="193"/>
    </location>
    <ligand>
        <name>Mg(2+)</name>
        <dbReference type="ChEBI" id="CHEBI:18420"/>
    </ligand>
</feature>
<feature type="binding site" evidence="1">
    <location>
        <position position="194"/>
    </location>
    <ligand>
        <name>Mg(2+)</name>
        <dbReference type="ChEBI" id="CHEBI:18420"/>
    </ligand>
</feature>
<feature type="binding site" evidence="1">
    <location>
        <position position="288"/>
    </location>
    <ligand>
        <name>substrate</name>
    </ligand>
</feature>
<feature type="binding site" evidence="1">
    <location>
        <position position="321"/>
    </location>
    <ligand>
        <name>substrate</name>
    </ligand>
</feature>
<feature type="binding site" evidence="1">
    <location>
        <position position="368"/>
    </location>
    <ligand>
        <name>substrate</name>
    </ligand>
</feature>
<feature type="site" description="Transition state stabilizer" evidence="1">
    <location>
        <position position="329"/>
    </location>
</feature>
<feature type="modified residue" description="N6-carboxylysine" evidence="1">
    <location>
        <position position="191"/>
    </location>
</feature>
<sequence length="459" mass="50519">MDQSNRYARLDLQEADLIAGGRHVLCAYVMKPKAGYGYLETAAHFAAESSTGTNVEVSTTDDFTRGVDALVYEIDPEKEIMKIAYPVELFDRNIIDGRAMLCSFLTLTIGNNQGMGDVEYAKMHDFYVPPCYLRLFDGPSMNIADMWRVLGRDVRNGGMVVGTIIKPKLGLRPKPFADACHEFWLGADFIKNDEPQGNQTFAPLKETIRLVADAMKRAQDETGEAKLFSANITADDHYEMVARGEYILETFGENADHVAFLVDGYVTGPAAITTARRQFPRQFLHYHRAGHGAVTSPQSMRGYTAFVLSKMARLQGASGIHTGTMGYGKMEGEAADKIMAYMLTDEAAEGPFYRQTGWGSKATTPIISGGMNALRLPGFFDNLGHSNVIQTSGGGAFGHLDGGTAGAKSLRQSHEAWMAGVDLVTYAREHRELARAFESFPADADKFYPGWRDRLHRAA</sequence>
<reference key="1">
    <citation type="journal article" date="1988" name="FEMS Microbiol. Lett.">
        <title>Nucleotide and deduced amino acid sequence of the Rhodobacter sphaeroides gene encoding form II ribulose-1,5-biphosphate carboxylase/oxygenase and comparison with other deduced forms I and II sequences.</title>
        <authorList>
            <person name="Wagner S.J."/>
            <person name="Stevens S.E. Jr."/>
            <person name="Nixon B.T."/>
            <person name="Lambert D.H."/>
            <person name="Quivey R.G. Jr."/>
            <person name="Tabita F.R."/>
        </authorList>
    </citation>
    <scope>NUCLEOTIDE SEQUENCE [GENOMIC DNA]</scope>
</reference>
<reference key="2">
    <citation type="journal article" date="1991" name="J. Biol. Chem.">
        <title>Identification, expression, and deduced primary structure of transketolase and other enzymes encoded within the form II CO2 fixation operon of Rhodobacter sphaeroides.</title>
        <authorList>
            <person name="Chen J.-H."/>
            <person name="Gibson J.L."/>
            <person name="McCue L.A."/>
            <person name="Tabita F.R."/>
        </authorList>
    </citation>
    <scope>NUCLEOTIDE SEQUENCE [GENOMIC DNA] OF 1-36</scope>
</reference>
<evidence type="ECO:0000255" key="1">
    <source>
        <dbReference type="HAMAP-Rule" id="MF_01339"/>
    </source>
</evidence>
<proteinExistence type="inferred from homology"/>
<keyword id="KW-0113">Calvin cycle</keyword>
<keyword id="KW-0120">Carbon dioxide fixation</keyword>
<keyword id="KW-0456">Lyase</keyword>
<keyword id="KW-0460">Magnesium</keyword>
<keyword id="KW-0479">Metal-binding</keyword>
<keyword id="KW-0503">Monooxygenase</keyword>
<keyword id="KW-0560">Oxidoreductase</keyword>
<keyword id="KW-0602">Photosynthesis</keyword>
<comment type="function">
    <text evidence="1">RuBisCO catalyzes two reactions: the carboxylation of D-ribulose 1,5-bisphosphate, the primary event in carbon dioxide fixation, as well as the oxidative fragmentation of the pentose substrate. Both reactions occur simultaneously and in competition at the same active site.</text>
</comment>
<comment type="catalytic activity">
    <reaction evidence="1">
        <text>2 (2R)-3-phosphoglycerate + 2 H(+) = D-ribulose 1,5-bisphosphate + CO2 + H2O</text>
        <dbReference type="Rhea" id="RHEA:23124"/>
        <dbReference type="ChEBI" id="CHEBI:15377"/>
        <dbReference type="ChEBI" id="CHEBI:15378"/>
        <dbReference type="ChEBI" id="CHEBI:16526"/>
        <dbReference type="ChEBI" id="CHEBI:57870"/>
        <dbReference type="ChEBI" id="CHEBI:58272"/>
        <dbReference type="EC" id="4.1.1.39"/>
    </reaction>
</comment>
<comment type="catalytic activity">
    <reaction evidence="1">
        <text>D-ribulose 1,5-bisphosphate + O2 = 2-phosphoglycolate + (2R)-3-phosphoglycerate + 2 H(+)</text>
        <dbReference type="Rhea" id="RHEA:36631"/>
        <dbReference type="ChEBI" id="CHEBI:15378"/>
        <dbReference type="ChEBI" id="CHEBI:15379"/>
        <dbReference type="ChEBI" id="CHEBI:57870"/>
        <dbReference type="ChEBI" id="CHEBI:58033"/>
        <dbReference type="ChEBI" id="CHEBI:58272"/>
    </reaction>
</comment>
<comment type="cofactor">
    <cofactor evidence="1">
        <name>Mg(2+)</name>
        <dbReference type="ChEBI" id="CHEBI:18420"/>
    </cofactor>
    <text evidence="1">Binds 1 Mg(2+) ion per subunit.</text>
</comment>
<comment type="subunit">
    <text evidence="1">Homodimer.</text>
</comment>
<comment type="miscellaneous">
    <text evidence="1">The basic functional RuBisCO is composed of a large chain homodimer in a 'head-to-tail' conformation. In contrast to form I RuBisCO, the form II RuBisCO are composed solely of large subunits.</text>
</comment>
<comment type="similarity">
    <text evidence="1">Belongs to the RuBisCO large chain family. Type II subfamily.</text>
</comment>
<gene>
    <name evidence="1" type="primary">cbbM</name>
    <name type="synonym">cbbL2</name>
    <name type="synonym">rbpL</name>
</gene>
<name>RBL2_CERSP</name>
<dbReference type="EC" id="4.1.1.39" evidence="1"/>
<dbReference type="EMBL" id="M68914">
    <property type="protein sequence ID" value="AAA26158.1"/>
    <property type="status" value="ALT_SEQ"/>
    <property type="molecule type" value="Genomic_DNA"/>
</dbReference>
<dbReference type="PIR" id="E41080">
    <property type="entry name" value="E41080"/>
</dbReference>
<dbReference type="SMR" id="P29278"/>
<dbReference type="GO" id="GO:0000287">
    <property type="term" value="F:magnesium ion binding"/>
    <property type="evidence" value="ECO:0007669"/>
    <property type="project" value="UniProtKB-UniRule"/>
</dbReference>
<dbReference type="GO" id="GO:0004497">
    <property type="term" value="F:monooxygenase activity"/>
    <property type="evidence" value="ECO:0007669"/>
    <property type="project" value="UniProtKB-KW"/>
</dbReference>
<dbReference type="GO" id="GO:0016984">
    <property type="term" value="F:ribulose-bisphosphate carboxylase activity"/>
    <property type="evidence" value="ECO:0007669"/>
    <property type="project" value="UniProtKB-UniRule"/>
</dbReference>
<dbReference type="GO" id="GO:0019253">
    <property type="term" value="P:reductive pentose-phosphate cycle"/>
    <property type="evidence" value="ECO:0007669"/>
    <property type="project" value="UniProtKB-KW"/>
</dbReference>
<dbReference type="CDD" id="cd08211">
    <property type="entry name" value="RuBisCO_large_II"/>
    <property type="match status" value="1"/>
</dbReference>
<dbReference type="Gene3D" id="3.20.20.110">
    <property type="entry name" value="Ribulose bisphosphate carboxylase, large subunit, C-terminal domain"/>
    <property type="match status" value="1"/>
</dbReference>
<dbReference type="Gene3D" id="3.30.70.150">
    <property type="entry name" value="RuBisCO large subunit, N-terminal domain"/>
    <property type="match status" value="1"/>
</dbReference>
<dbReference type="HAMAP" id="MF_01339">
    <property type="entry name" value="RuBisCO_L_type2"/>
    <property type="match status" value="1"/>
</dbReference>
<dbReference type="InterPro" id="IPR033966">
    <property type="entry name" value="RuBisCO"/>
</dbReference>
<dbReference type="InterPro" id="IPR020878">
    <property type="entry name" value="RuBisCo_large_chain_AS"/>
</dbReference>
<dbReference type="InterPro" id="IPR000685">
    <property type="entry name" value="RuBisCO_lsu_C"/>
</dbReference>
<dbReference type="InterPro" id="IPR036376">
    <property type="entry name" value="RuBisCO_lsu_C_sf"/>
</dbReference>
<dbReference type="InterPro" id="IPR017443">
    <property type="entry name" value="RuBisCO_lsu_fd_N"/>
</dbReference>
<dbReference type="InterPro" id="IPR036422">
    <property type="entry name" value="RuBisCO_lsu_N_sf"/>
</dbReference>
<dbReference type="InterPro" id="IPR020871">
    <property type="entry name" value="RuBisCO_lsuII"/>
</dbReference>
<dbReference type="NCBIfam" id="NF010002">
    <property type="entry name" value="PRK13475.1"/>
    <property type="match status" value="1"/>
</dbReference>
<dbReference type="PANTHER" id="PTHR42704">
    <property type="entry name" value="RIBULOSE BISPHOSPHATE CARBOXYLASE"/>
    <property type="match status" value="1"/>
</dbReference>
<dbReference type="PANTHER" id="PTHR42704:SF17">
    <property type="entry name" value="RIBULOSE BISPHOSPHATE CARBOXYLASE LARGE CHAIN"/>
    <property type="match status" value="1"/>
</dbReference>
<dbReference type="Pfam" id="PF00016">
    <property type="entry name" value="RuBisCO_large"/>
    <property type="match status" value="1"/>
</dbReference>
<dbReference type="Pfam" id="PF02788">
    <property type="entry name" value="RuBisCO_large_N"/>
    <property type="match status" value="1"/>
</dbReference>
<dbReference type="SFLD" id="SFLDS00014">
    <property type="entry name" value="RuBisCO"/>
    <property type="match status" value="1"/>
</dbReference>
<dbReference type="SFLD" id="SFLDG00301">
    <property type="entry name" value="RuBisCO-like_proteins"/>
    <property type="match status" value="1"/>
</dbReference>
<dbReference type="SUPFAM" id="SSF51649">
    <property type="entry name" value="RuBisCo, C-terminal domain"/>
    <property type="match status" value="1"/>
</dbReference>
<dbReference type="SUPFAM" id="SSF54966">
    <property type="entry name" value="RuBisCO, large subunit, small (N-terminal) domain"/>
    <property type="match status" value="1"/>
</dbReference>
<dbReference type="PROSITE" id="PS00157">
    <property type="entry name" value="RUBISCO_LARGE"/>
    <property type="match status" value="1"/>
</dbReference>
<organism>
    <name type="scientific">Cereibacter sphaeroides</name>
    <name type="common">Rhodobacter sphaeroides</name>
    <dbReference type="NCBI Taxonomy" id="1063"/>
    <lineage>
        <taxon>Bacteria</taxon>
        <taxon>Pseudomonadati</taxon>
        <taxon>Pseudomonadota</taxon>
        <taxon>Alphaproteobacteria</taxon>
        <taxon>Rhodobacterales</taxon>
        <taxon>Paracoccaceae</taxon>
        <taxon>Cereibacter</taxon>
    </lineage>
</organism>
<accession>P29278</accession>
<protein>
    <recommendedName>
        <fullName evidence="1">Ribulose bisphosphate carboxylase</fullName>
        <shortName evidence="1">RuBisCO</shortName>
        <ecNumber evidence="1">4.1.1.39</ecNumber>
    </recommendedName>
</protein>